<comment type="function">
    <text evidence="1">Required for disulfide bond formation in some periplasmic proteins. Acts by oxidizing the DsbA protein.</text>
</comment>
<comment type="subcellular location">
    <subcellularLocation>
        <location evidence="1">Cell inner membrane</location>
        <topology evidence="1">Multi-pass membrane protein</topology>
    </subcellularLocation>
</comment>
<comment type="similarity">
    <text evidence="1">Belongs to the DsbB family.</text>
</comment>
<comment type="sequence caution" evidence="2">
    <conflict type="erroneous initiation">
        <sequence resource="EMBL-CDS" id="CAM09020"/>
    </conflict>
</comment>
<organism>
    <name type="scientific">Neisseria meningitidis serogroup A / serotype 4A (strain DSM 15465 / Z2491)</name>
    <dbReference type="NCBI Taxonomy" id="122587"/>
    <lineage>
        <taxon>Bacteria</taxon>
        <taxon>Pseudomonadati</taxon>
        <taxon>Pseudomonadota</taxon>
        <taxon>Betaproteobacteria</taxon>
        <taxon>Neisseriales</taxon>
        <taxon>Neisseriaceae</taxon>
        <taxon>Neisseria</taxon>
    </lineage>
</organism>
<keyword id="KW-0997">Cell inner membrane</keyword>
<keyword id="KW-1003">Cell membrane</keyword>
<keyword id="KW-0143">Chaperone</keyword>
<keyword id="KW-1015">Disulfide bond</keyword>
<keyword id="KW-0249">Electron transport</keyword>
<keyword id="KW-0472">Membrane</keyword>
<keyword id="KW-0560">Oxidoreductase</keyword>
<keyword id="KW-0676">Redox-active center</keyword>
<keyword id="KW-0812">Transmembrane</keyword>
<keyword id="KW-1133">Transmembrane helix</keyword>
<keyword id="KW-0813">Transport</keyword>
<name>DSBB_NEIMA</name>
<gene>
    <name evidence="1" type="primary">dsbB</name>
    <name type="ordered locus">NMA1903</name>
</gene>
<evidence type="ECO:0000255" key="1">
    <source>
        <dbReference type="HAMAP-Rule" id="MF_00286"/>
    </source>
</evidence>
<evidence type="ECO:0000305" key="2"/>
<accession>Q9JTA9</accession>
<accession>A1ITA7</accession>
<sequence>MTPLFRKAVWLLFAVSVCAFAGSLAAQYVLGMEPCVLCISQRLCVLATALCAAIVLMCRPRRKAGGLFGAVFISIPAVTGISVAAYQLWLQSLPPGTAPSCGAPWTFRLKGWPLFDWFEPVVRGFGNCAEPDYLLGVALPVWSVAYFLAVALTVWWAWARAK</sequence>
<protein>
    <recommendedName>
        <fullName evidence="1">Disulfide bond formation protein B</fullName>
    </recommendedName>
    <alternativeName>
        <fullName evidence="1">Disulfide oxidoreductase</fullName>
    </alternativeName>
</protein>
<proteinExistence type="inferred from homology"/>
<feature type="chain" id="PRO_0000059347" description="Disulfide bond formation protein B">
    <location>
        <begin position="1"/>
        <end position="162"/>
    </location>
</feature>
<feature type="topological domain" description="Cytoplasmic" evidence="1">
    <location>
        <begin position="1"/>
        <end position="8"/>
    </location>
</feature>
<feature type="transmembrane region" description="Helical" evidence="1">
    <location>
        <begin position="9"/>
        <end position="25"/>
    </location>
</feature>
<feature type="topological domain" description="Periplasmic" evidence="1">
    <location>
        <begin position="26"/>
        <end position="43"/>
    </location>
</feature>
<feature type="transmembrane region" description="Helical" evidence="1">
    <location>
        <begin position="44"/>
        <end position="60"/>
    </location>
</feature>
<feature type="topological domain" description="Cytoplasmic" evidence="1">
    <location>
        <begin position="61"/>
        <end position="67"/>
    </location>
</feature>
<feature type="transmembrane region" description="Helical" evidence="1">
    <location>
        <begin position="68"/>
        <end position="85"/>
    </location>
</feature>
<feature type="topological domain" description="Periplasmic" evidence="1">
    <location>
        <begin position="86"/>
        <end position="141"/>
    </location>
</feature>
<feature type="transmembrane region" description="Helical" evidence="1">
    <location>
        <begin position="142"/>
        <end position="160"/>
    </location>
</feature>
<feature type="topological domain" description="Cytoplasmic" evidence="1">
    <location>
        <begin position="161"/>
        <end position="162"/>
    </location>
</feature>
<feature type="disulfide bond" description="Redox-active" evidence="1">
    <location>
        <begin position="35"/>
        <end position="38"/>
    </location>
</feature>
<feature type="disulfide bond" description="Redox-active" evidence="1">
    <location>
        <begin position="101"/>
        <end position="128"/>
    </location>
</feature>
<dbReference type="EMBL" id="AL157959">
    <property type="protein sequence ID" value="CAM09020.1"/>
    <property type="status" value="ALT_INIT"/>
    <property type="molecule type" value="Genomic_DNA"/>
</dbReference>
<dbReference type="RefSeq" id="WP_002237262.1">
    <property type="nucleotide sequence ID" value="NC_003116.1"/>
</dbReference>
<dbReference type="SMR" id="Q9JTA9"/>
<dbReference type="EnsemblBacteria" id="CAM09020">
    <property type="protein sequence ID" value="CAM09020"/>
    <property type="gene ID" value="NMA1903"/>
</dbReference>
<dbReference type="KEGG" id="nma:NMA1903"/>
<dbReference type="HOGENOM" id="CLU_098660_1_1_4"/>
<dbReference type="Proteomes" id="UP000000626">
    <property type="component" value="Chromosome"/>
</dbReference>
<dbReference type="GO" id="GO:0005886">
    <property type="term" value="C:plasma membrane"/>
    <property type="evidence" value="ECO:0007669"/>
    <property type="project" value="UniProtKB-SubCell"/>
</dbReference>
<dbReference type="GO" id="GO:0009055">
    <property type="term" value="F:electron transfer activity"/>
    <property type="evidence" value="ECO:0007669"/>
    <property type="project" value="UniProtKB-UniRule"/>
</dbReference>
<dbReference type="GO" id="GO:0015035">
    <property type="term" value="F:protein-disulfide reductase activity"/>
    <property type="evidence" value="ECO:0007669"/>
    <property type="project" value="UniProtKB-UniRule"/>
</dbReference>
<dbReference type="GO" id="GO:0006457">
    <property type="term" value="P:protein folding"/>
    <property type="evidence" value="ECO:0007669"/>
    <property type="project" value="InterPro"/>
</dbReference>
<dbReference type="Gene3D" id="1.20.1550.10">
    <property type="entry name" value="DsbB-like"/>
    <property type="match status" value="1"/>
</dbReference>
<dbReference type="HAMAP" id="MF_00286">
    <property type="entry name" value="DsbB"/>
    <property type="match status" value="1"/>
</dbReference>
<dbReference type="InterPro" id="IPR003752">
    <property type="entry name" value="DiS_bond_form_DsbB/BdbC"/>
</dbReference>
<dbReference type="InterPro" id="IPR022920">
    <property type="entry name" value="Disulphide_bond_form_DsbB"/>
</dbReference>
<dbReference type="InterPro" id="IPR050183">
    <property type="entry name" value="DsbB"/>
</dbReference>
<dbReference type="InterPro" id="IPR023380">
    <property type="entry name" value="DsbB-like_sf"/>
</dbReference>
<dbReference type="PANTHER" id="PTHR36570">
    <property type="entry name" value="DISULFIDE BOND FORMATION PROTEIN B"/>
    <property type="match status" value="1"/>
</dbReference>
<dbReference type="PANTHER" id="PTHR36570:SF3">
    <property type="entry name" value="DISULFIDE BOND FORMATION PROTEIN B"/>
    <property type="match status" value="1"/>
</dbReference>
<dbReference type="Pfam" id="PF02600">
    <property type="entry name" value="DsbB"/>
    <property type="match status" value="1"/>
</dbReference>
<dbReference type="SUPFAM" id="SSF158442">
    <property type="entry name" value="DsbB-like"/>
    <property type="match status" value="1"/>
</dbReference>
<reference key="1">
    <citation type="journal article" date="2000" name="Nature">
        <title>Complete DNA sequence of a serogroup A strain of Neisseria meningitidis Z2491.</title>
        <authorList>
            <person name="Parkhill J."/>
            <person name="Achtman M."/>
            <person name="James K.D."/>
            <person name="Bentley S.D."/>
            <person name="Churcher C.M."/>
            <person name="Klee S.R."/>
            <person name="Morelli G."/>
            <person name="Basham D."/>
            <person name="Brown D."/>
            <person name="Chillingworth T."/>
            <person name="Davies R.M."/>
            <person name="Davis P."/>
            <person name="Devlin K."/>
            <person name="Feltwell T."/>
            <person name="Hamlin N."/>
            <person name="Holroyd S."/>
            <person name="Jagels K."/>
            <person name="Leather S."/>
            <person name="Moule S."/>
            <person name="Mungall K.L."/>
            <person name="Quail M.A."/>
            <person name="Rajandream M.A."/>
            <person name="Rutherford K.M."/>
            <person name="Simmonds M."/>
            <person name="Skelton J."/>
            <person name="Whitehead S."/>
            <person name="Spratt B.G."/>
            <person name="Barrell B.G."/>
        </authorList>
    </citation>
    <scope>NUCLEOTIDE SEQUENCE [LARGE SCALE GENOMIC DNA]</scope>
    <source>
        <strain>DSM 15465 / Z2491</strain>
    </source>
</reference>